<keyword id="KW-0932">Cytokinin signaling pathway</keyword>
<keyword id="KW-0217">Developmental protein</keyword>
<keyword id="KW-0221">Differentiation</keyword>
<keyword id="KW-0939">Gibberellin signaling pathway</keyword>
<keyword id="KW-0479">Metal-binding</keyword>
<keyword id="KW-0539">Nucleus</keyword>
<keyword id="KW-1185">Reference proteome</keyword>
<keyword id="KW-0804">Transcription</keyword>
<keyword id="KW-0805">Transcription regulation</keyword>
<keyword id="KW-0862">Zinc</keyword>
<keyword id="KW-0863">Zinc-finger</keyword>
<feature type="chain" id="PRO_0000425725" description="Zinc finger protein GIS2">
    <location>
        <begin position="1"/>
        <end position="191"/>
    </location>
</feature>
<feature type="zinc finger region" description="C2H2-type" evidence="2">
    <location>
        <begin position="55"/>
        <end position="77"/>
    </location>
</feature>
<organism>
    <name type="scientific">Arabidopsis thaliana</name>
    <name type="common">Mouse-ear cress</name>
    <dbReference type="NCBI Taxonomy" id="3702"/>
    <lineage>
        <taxon>Eukaryota</taxon>
        <taxon>Viridiplantae</taxon>
        <taxon>Streptophyta</taxon>
        <taxon>Embryophyta</taxon>
        <taxon>Tracheophyta</taxon>
        <taxon>Spermatophyta</taxon>
        <taxon>Magnoliopsida</taxon>
        <taxon>eudicotyledons</taxon>
        <taxon>Gunneridae</taxon>
        <taxon>Pentapetalae</taxon>
        <taxon>rosids</taxon>
        <taxon>malvids</taxon>
        <taxon>Brassicales</taxon>
        <taxon>Brassicaceae</taxon>
        <taxon>Camelineae</taxon>
        <taxon>Arabidopsis</taxon>
    </lineage>
</organism>
<dbReference type="EMBL" id="AP002543">
    <property type="protein sequence ID" value="BAB11414.1"/>
    <property type="molecule type" value="Genomic_DNA"/>
</dbReference>
<dbReference type="EMBL" id="CP002688">
    <property type="protein sequence ID" value="AED91046.1"/>
    <property type="molecule type" value="Genomic_DNA"/>
</dbReference>
<dbReference type="EMBL" id="AB493740">
    <property type="protein sequence ID" value="BAH30578.1"/>
    <property type="molecule type" value="Genomic_DNA"/>
</dbReference>
<dbReference type="RefSeq" id="NP_196283.1">
    <property type="nucleotide sequence ID" value="NM_120748.2"/>
</dbReference>
<dbReference type="BioGRID" id="15832">
    <property type="interactions" value="15"/>
</dbReference>
<dbReference type="IntAct" id="Q9FG05">
    <property type="interactions" value="15"/>
</dbReference>
<dbReference type="STRING" id="3702.Q9FG05"/>
<dbReference type="PaxDb" id="3702-AT5G06650.1"/>
<dbReference type="EnsemblPlants" id="AT5G06650.1">
    <property type="protein sequence ID" value="AT5G06650.1"/>
    <property type="gene ID" value="AT5G06650"/>
</dbReference>
<dbReference type="GeneID" id="830553"/>
<dbReference type="Gramene" id="AT5G06650.1">
    <property type="protein sequence ID" value="AT5G06650.1"/>
    <property type="gene ID" value="AT5G06650"/>
</dbReference>
<dbReference type="KEGG" id="ath:AT5G06650"/>
<dbReference type="Araport" id="AT5G06650"/>
<dbReference type="TAIR" id="AT5G06650">
    <property type="gene designation" value="GIS2"/>
</dbReference>
<dbReference type="eggNOG" id="ENOG502R1BM">
    <property type="taxonomic scope" value="Eukaryota"/>
</dbReference>
<dbReference type="HOGENOM" id="CLU_058544_1_0_1"/>
<dbReference type="InParanoid" id="Q9FG05"/>
<dbReference type="OMA" id="FNLHSNA"/>
<dbReference type="PhylomeDB" id="Q9FG05"/>
<dbReference type="PRO" id="PR:Q9FG05"/>
<dbReference type="Proteomes" id="UP000006548">
    <property type="component" value="Chromosome 5"/>
</dbReference>
<dbReference type="ExpressionAtlas" id="Q9FG05">
    <property type="expression patterns" value="baseline and differential"/>
</dbReference>
<dbReference type="GO" id="GO:0005634">
    <property type="term" value="C:nucleus"/>
    <property type="evidence" value="ECO:0007669"/>
    <property type="project" value="UniProtKB-SubCell"/>
</dbReference>
<dbReference type="GO" id="GO:0003700">
    <property type="term" value="F:DNA-binding transcription factor activity"/>
    <property type="evidence" value="ECO:0000250"/>
    <property type="project" value="TAIR"/>
</dbReference>
<dbReference type="GO" id="GO:0008270">
    <property type="term" value="F:zinc ion binding"/>
    <property type="evidence" value="ECO:0007669"/>
    <property type="project" value="UniProtKB-KW"/>
</dbReference>
<dbReference type="GO" id="GO:0009736">
    <property type="term" value="P:cytokinin-activated signaling pathway"/>
    <property type="evidence" value="ECO:0007669"/>
    <property type="project" value="UniProtKB-KW"/>
</dbReference>
<dbReference type="GO" id="GO:0009740">
    <property type="term" value="P:gibberellic acid mediated signaling pathway"/>
    <property type="evidence" value="ECO:0007669"/>
    <property type="project" value="UniProtKB-KW"/>
</dbReference>
<dbReference type="GO" id="GO:0006355">
    <property type="term" value="P:regulation of DNA-templated transcription"/>
    <property type="evidence" value="ECO:0000304"/>
    <property type="project" value="TAIR"/>
</dbReference>
<dbReference type="GO" id="GO:0009735">
    <property type="term" value="P:response to cytokinin"/>
    <property type="evidence" value="ECO:0000315"/>
    <property type="project" value="TAIR"/>
</dbReference>
<dbReference type="GO" id="GO:0009739">
    <property type="term" value="P:response to gibberellin"/>
    <property type="evidence" value="ECO:0000315"/>
    <property type="project" value="TAIR"/>
</dbReference>
<dbReference type="GO" id="GO:0010026">
    <property type="term" value="P:trichome differentiation"/>
    <property type="evidence" value="ECO:0000315"/>
    <property type="project" value="TAIR"/>
</dbReference>
<dbReference type="GO" id="GO:0010090">
    <property type="term" value="P:trichome morphogenesis"/>
    <property type="evidence" value="ECO:0007669"/>
    <property type="project" value="InterPro"/>
</dbReference>
<dbReference type="Gene3D" id="3.30.160.60">
    <property type="entry name" value="Classic Zinc Finger"/>
    <property type="match status" value="1"/>
</dbReference>
<dbReference type="InterPro" id="IPR044291">
    <property type="entry name" value="GIS/GIS2/ZFP8"/>
</dbReference>
<dbReference type="InterPro" id="IPR036236">
    <property type="entry name" value="Znf_C2H2_sf"/>
</dbReference>
<dbReference type="InterPro" id="IPR013087">
    <property type="entry name" value="Znf_C2H2_type"/>
</dbReference>
<dbReference type="PANTHER" id="PTHR46547">
    <property type="entry name" value="ZINC FINGER PROTEIN GIS"/>
    <property type="match status" value="1"/>
</dbReference>
<dbReference type="PANTHER" id="PTHR46547:SF6">
    <property type="entry name" value="ZINC FINGER PROTEIN GIS2"/>
    <property type="match status" value="1"/>
</dbReference>
<dbReference type="Pfam" id="PF13912">
    <property type="entry name" value="zf-C2H2_6"/>
    <property type="match status" value="1"/>
</dbReference>
<dbReference type="SUPFAM" id="SSF57667">
    <property type="entry name" value="beta-beta-alpha zinc fingers"/>
    <property type="match status" value="1"/>
</dbReference>
<dbReference type="PROSITE" id="PS00028">
    <property type="entry name" value="ZINC_FINGER_C2H2_1"/>
    <property type="match status" value="1"/>
</dbReference>
<dbReference type="PROSITE" id="PS50157">
    <property type="entry name" value="ZINC_FINGER_C2H2_2"/>
    <property type="match status" value="1"/>
</dbReference>
<name>GIS2_ARATH</name>
<evidence type="ECO:0000250" key="1">
    <source>
        <dbReference type="UniProtKB" id="Q9SLB8"/>
    </source>
</evidence>
<evidence type="ECO:0000255" key="2">
    <source>
        <dbReference type="PROSITE-ProRule" id="PRU00042"/>
    </source>
</evidence>
<evidence type="ECO:0000269" key="3">
    <source>
    </source>
</evidence>
<comment type="function">
    <text evidence="3">Probable transcription factor required for the initiation of inflorescence trichomes in response to gibberellin and cytokinin. Is not involved in the regulation of trichome branching. Is functionally equivalent to ZFP8.</text>
</comment>
<comment type="subcellular location">
    <subcellularLocation>
        <location evidence="1">Nucleus</location>
    </subcellularLocation>
</comment>
<comment type="tissue specificity">
    <text evidence="3">Expressed in inflorescence meristems, floral meristems and stem epidermis.</text>
</comment>
<comment type="induction">
    <text evidence="3">By cytokinin and gibberellin.</text>
</comment>
<comment type="disruption phenotype">
    <text evidence="3">Reduced trichome production on cauline leaves, stem branches and sepals.</text>
</comment>
<gene>
    <name type="primary">GIS2</name>
    <name type="ordered locus">At5g06650</name>
</gene>
<reference key="1">
    <citation type="submission" date="2000-07" db="EMBL/GenBank/DDBJ databases">
        <title>Structural analysis of Arabidopsis thaliana chromosome 5. XI.</title>
        <authorList>
            <person name="Kaneko T."/>
            <person name="Katoh T."/>
            <person name="Asamizu E."/>
            <person name="Sato S."/>
            <person name="Nakamura Y."/>
            <person name="Kotani H."/>
            <person name="Tabata S."/>
        </authorList>
    </citation>
    <scope>NUCLEOTIDE SEQUENCE [LARGE SCALE GENOMIC DNA]</scope>
    <source>
        <strain>cv. Columbia</strain>
    </source>
</reference>
<reference key="2">
    <citation type="journal article" date="2017" name="Plant J.">
        <title>Araport11: a complete reannotation of the Arabidopsis thaliana reference genome.</title>
        <authorList>
            <person name="Cheng C.Y."/>
            <person name="Krishnakumar V."/>
            <person name="Chan A.P."/>
            <person name="Thibaud-Nissen F."/>
            <person name="Schobel S."/>
            <person name="Town C.D."/>
        </authorList>
    </citation>
    <scope>GENOME REANNOTATION</scope>
    <source>
        <strain>cv. Columbia</strain>
    </source>
</reference>
<reference key="3">
    <citation type="submission" date="2009-03" db="EMBL/GenBank/DDBJ databases">
        <title>ORF cloning and analysis of Arabidopsis transcription factor genes.</title>
        <authorList>
            <person name="Fujita M."/>
            <person name="Mizukado S."/>
            <person name="Seki M."/>
            <person name="Shinozaki K."/>
            <person name="Mitsuda N."/>
            <person name="Takiguchi Y."/>
            <person name="Takagi M."/>
        </authorList>
    </citation>
    <scope>NUCLEOTIDE SEQUENCE [LARGE SCALE GENOMIC DNA]</scope>
</reference>
<reference key="4">
    <citation type="journal article" date="2007" name="Development">
        <title>Integration of cytokinin and gibberellin signalling by Arabidopsis transcription factors GIS, ZFP8 and GIS2 in the regulation of epidermal cell fate.</title>
        <authorList>
            <person name="Gan Y."/>
            <person name="Liu C."/>
            <person name="Yu H."/>
            <person name="Broun P."/>
        </authorList>
    </citation>
    <scope>FUNCTION</scope>
    <scope>TISSUE SPECIFICITY</scope>
    <scope>INDUCTION</scope>
    <scope>DISRUPTION PHENOTYPE</scope>
</reference>
<protein>
    <recommendedName>
        <fullName>Zinc finger protein GIS2</fullName>
    </recommendedName>
    <alternativeName>
        <fullName>Protein GLABROUS INFLORESCENCE STEMS 2</fullName>
    </alternativeName>
</protein>
<accession>Q9FG05</accession>
<sequence>MKTYDFMNVNSFSPKERPIRLFGFEFGASHEESESKDNYNENNESIKDDNKEKRFKCHYCFRNFPTSQALGGHQNAHKRERQQTKRFNLHSNAAAFFHRQQNHIAASRLYEDRYSLEAVQINDARLGLCRMYNSSASFNRDRSSYYNRYIPWFIGDHQTRPTYVGGGSSSHGLFYESKKNVPDHVSLDLRL</sequence>
<proteinExistence type="evidence at transcript level"/>